<reference key="1">
    <citation type="journal article" date="1998" name="Nature">
        <title>Deciphering the biology of Mycobacterium tuberculosis from the complete genome sequence.</title>
        <authorList>
            <person name="Cole S.T."/>
            <person name="Brosch R."/>
            <person name="Parkhill J."/>
            <person name="Garnier T."/>
            <person name="Churcher C.M."/>
            <person name="Harris D.E."/>
            <person name="Gordon S.V."/>
            <person name="Eiglmeier K."/>
            <person name="Gas S."/>
            <person name="Barry C.E. III"/>
            <person name="Tekaia F."/>
            <person name="Badcock K."/>
            <person name="Basham D."/>
            <person name="Brown D."/>
            <person name="Chillingworth T."/>
            <person name="Connor R."/>
            <person name="Davies R.M."/>
            <person name="Devlin K."/>
            <person name="Feltwell T."/>
            <person name="Gentles S."/>
            <person name="Hamlin N."/>
            <person name="Holroyd S."/>
            <person name="Hornsby T."/>
            <person name="Jagels K."/>
            <person name="Krogh A."/>
            <person name="McLean J."/>
            <person name="Moule S."/>
            <person name="Murphy L.D."/>
            <person name="Oliver S."/>
            <person name="Osborne J."/>
            <person name="Quail M.A."/>
            <person name="Rajandream M.A."/>
            <person name="Rogers J."/>
            <person name="Rutter S."/>
            <person name="Seeger K."/>
            <person name="Skelton S."/>
            <person name="Squares S."/>
            <person name="Squares R."/>
            <person name="Sulston J.E."/>
            <person name="Taylor K."/>
            <person name="Whitehead S."/>
            <person name="Barrell B.G."/>
        </authorList>
    </citation>
    <scope>NUCLEOTIDE SEQUENCE [LARGE SCALE GENOMIC DNA]</scope>
    <source>
        <strain>ATCC 25618 / H37Rv</strain>
    </source>
</reference>
<reference key="2">
    <citation type="journal article" date="2011" name="Mol. Cell. Proteomics">
        <title>Proteogenomic analysis of Mycobacterium tuberculosis by high resolution mass spectrometry.</title>
        <authorList>
            <person name="Kelkar D.S."/>
            <person name="Kumar D."/>
            <person name="Kumar P."/>
            <person name="Balakrishnan L."/>
            <person name="Muthusamy B."/>
            <person name="Yadav A.K."/>
            <person name="Shrivastava P."/>
            <person name="Marimuthu A."/>
            <person name="Anand S."/>
            <person name="Sundaram H."/>
            <person name="Kingsbury R."/>
            <person name="Harsha H.C."/>
            <person name="Nair B."/>
            <person name="Prasad T.S."/>
            <person name="Chauhan D.S."/>
            <person name="Katoch K."/>
            <person name="Katoch V.M."/>
            <person name="Kumar P."/>
            <person name="Chaerkady R."/>
            <person name="Ramachandran S."/>
            <person name="Dash D."/>
            <person name="Pandey A."/>
        </authorList>
    </citation>
    <scope>IDENTIFICATION BY MASS SPECTROMETRY [LARGE SCALE ANALYSIS]</scope>
    <source>
        <strain>ATCC 25618 / H37Rv</strain>
    </source>
</reference>
<sequence length="224" mass="24295">MTGGATGALPRTMKEGWIVYARSTTIQAQSECIDTGIAHVRDVVMPALQGMDGCIGVSLLVDRQSGRCIATSAWETAEAMHASREQVTPIRDRCAEMFGGTPAVEEWEIAAMHRDHRSAEGACVRATWVKVPADQVDQGIEYYKSSVLPQIEGLDGFCSASLLVDRTSGRAVSSATFDSFDAMERNRDQSNALKATSLREAGGEELDECEFELALAHLRVPELV</sequence>
<organism>
    <name type="scientific">Mycobacterium tuberculosis (strain ATCC 25618 / H37Rv)</name>
    <dbReference type="NCBI Taxonomy" id="83332"/>
    <lineage>
        <taxon>Bacteria</taxon>
        <taxon>Bacillati</taxon>
        <taxon>Actinomycetota</taxon>
        <taxon>Actinomycetes</taxon>
        <taxon>Mycobacteriales</taxon>
        <taxon>Mycobacteriaceae</taxon>
        <taxon>Mycobacterium</taxon>
        <taxon>Mycobacterium tuberculosis complex</taxon>
    </lineage>
</organism>
<feature type="chain" id="PRO_0000104035" description="Uncharacterized protein Rv2557">
    <location>
        <begin position="1"/>
        <end position="224"/>
    </location>
</feature>
<name>Y2557_MYCTU</name>
<proteinExistence type="evidence at protein level"/>
<gene>
    <name type="ordered locus">Rv2557</name>
    <name type="ORF">MTCY9C4.11c</name>
</gene>
<protein>
    <recommendedName>
        <fullName>Uncharacterized protein Rv2557</fullName>
    </recommendedName>
</protein>
<evidence type="ECO:0000305" key="1"/>
<dbReference type="EMBL" id="AL123456">
    <property type="protein sequence ID" value="CCP45353.1"/>
    <property type="molecule type" value="Genomic_DNA"/>
</dbReference>
<dbReference type="PIR" id="A70728">
    <property type="entry name" value="A70728"/>
</dbReference>
<dbReference type="RefSeq" id="NP_217073.1">
    <property type="nucleotide sequence ID" value="NC_000962.3"/>
</dbReference>
<dbReference type="RefSeq" id="WP_003899374.1">
    <property type="nucleotide sequence ID" value="NC_000962.3"/>
</dbReference>
<dbReference type="SMR" id="P9WLA5"/>
<dbReference type="STRING" id="83332.Rv2557"/>
<dbReference type="PaxDb" id="83332-Rv2557"/>
<dbReference type="GeneID" id="887865"/>
<dbReference type="KEGG" id="mtu:Rv2557"/>
<dbReference type="KEGG" id="mtv:RVBD_2557"/>
<dbReference type="PATRIC" id="fig|83332.111.peg.2858"/>
<dbReference type="TubercuList" id="Rv2557"/>
<dbReference type="eggNOG" id="COG1359">
    <property type="taxonomic scope" value="Bacteria"/>
</dbReference>
<dbReference type="InParanoid" id="P9WLA5"/>
<dbReference type="OrthoDB" id="5182530at2"/>
<dbReference type="Proteomes" id="UP000001584">
    <property type="component" value="Chromosome"/>
</dbReference>
<dbReference type="GO" id="GO:0009267">
    <property type="term" value="P:cellular response to starvation"/>
    <property type="evidence" value="ECO:0000270"/>
    <property type="project" value="MTBBASE"/>
</dbReference>
<dbReference type="Gene3D" id="3.30.70.100">
    <property type="match status" value="1"/>
</dbReference>
<dbReference type="InterPro" id="IPR007138">
    <property type="entry name" value="ABM_dom"/>
</dbReference>
<dbReference type="InterPro" id="IPR011008">
    <property type="entry name" value="Dimeric_a/b-barrel"/>
</dbReference>
<dbReference type="Pfam" id="PF03992">
    <property type="entry name" value="ABM"/>
    <property type="match status" value="1"/>
</dbReference>
<dbReference type="SUPFAM" id="SSF54909">
    <property type="entry name" value="Dimeric alpha+beta barrel"/>
    <property type="match status" value="2"/>
</dbReference>
<keyword id="KW-1185">Reference proteome</keyword>
<accession>P9WLA5</accession>
<accession>L0TCQ7</accession>
<accession>P65003</accession>
<accession>Q50741</accession>
<comment type="similarity">
    <text evidence="1">To M.tuberculosis Rv2558.</text>
</comment>